<dbReference type="EC" id="2.7.7.6"/>
<dbReference type="EMBL" id="AF095689">
    <property type="protein sequence ID" value="AAF34020.1"/>
    <property type="molecule type" value="Genomic_DNA"/>
</dbReference>
<dbReference type="SMR" id="Q9JF79"/>
<dbReference type="Proteomes" id="UP000163220">
    <property type="component" value="Genome"/>
</dbReference>
<dbReference type="GO" id="GO:0000428">
    <property type="term" value="C:DNA-directed RNA polymerase complex"/>
    <property type="evidence" value="ECO:0007669"/>
    <property type="project" value="UniProtKB-KW"/>
</dbReference>
<dbReference type="GO" id="GO:0044423">
    <property type="term" value="C:virion component"/>
    <property type="evidence" value="ECO:0007669"/>
    <property type="project" value="UniProtKB-KW"/>
</dbReference>
<dbReference type="GO" id="GO:0003677">
    <property type="term" value="F:DNA binding"/>
    <property type="evidence" value="ECO:0007669"/>
    <property type="project" value="InterPro"/>
</dbReference>
<dbReference type="GO" id="GO:0003899">
    <property type="term" value="F:DNA-directed RNA polymerase activity"/>
    <property type="evidence" value="ECO:0007669"/>
    <property type="project" value="UniProtKB-EC"/>
</dbReference>
<dbReference type="GO" id="GO:0046872">
    <property type="term" value="F:metal ion binding"/>
    <property type="evidence" value="ECO:0007669"/>
    <property type="project" value="UniProtKB-KW"/>
</dbReference>
<dbReference type="GO" id="GO:0032549">
    <property type="term" value="F:ribonucleoside binding"/>
    <property type="evidence" value="ECO:0007669"/>
    <property type="project" value="InterPro"/>
</dbReference>
<dbReference type="GO" id="GO:0006351">
    <property type="term" value="P:DNA-templated transcription"/>
    <property type="evidence" value="ECO:0007669"/>
    <property type="project" value="InterPro"/>
</dbReference>
<dbReference type="Gene3D" id="2.40.50.150">
    <property type="match status" value="1"/>
</dbReference>
<dbReference type="Gene3D" id="3.90.1100.10">
    <property type="match status" value="2"/>
</dbReference>
<dbReference type="Gene3D" id="2.40.270.10">
    <property type="entry name" value="DNA-directed RNA polymerase, subunit 2, domain 6"/>
    <property type="match status" value="1"/>
</dbReference>
<dbReference type="Gene3D" id="3.90.1800.10">
    <property type="entry name" value="RNA polymerase alpha subunit dimerisation domain"/>
    <property type="match status" value="1"/>
</dbReference>
<dbReference type="InterPro" id="IPR015712">
    <property type="entry name" value="DNA-dir_RNA_pol_su2"/>
</dbReference>
<dbReference type="InterPro" id="IPR007120">
    <property type="entry name" value="DNA-dir_RNAP_su2_dom"/>
</dbReference>
<dbReference type="InterPro" id="IPR037033">
    <property type="entry name" value="DNA-dir_RNAP_su2_hyb_sf"/>
</dbReference>
<dbReference type="InterPro" id="IPR024390">
    <property type="entry name" value="RNA_pol_132_poxvirus"/>
</dbReference>
<dbReference type="InterPro" id="IPR007121">
    <property type="entry name" value="RNA_pol_bsu_CS"/>
</dbReference>
<dbReference type="InterPro" id="IPR007645">
    <property type="entry name" value="RNA_pol_Rpb2_3"/>
</dbReference>
<dbReference type="InterPro" id="IPR007647">
    <property type="entry name" value="RNA_pol_Rpb2_5"/>
</dbReference>
<dbReference type="InterPro" id="IPR007641">
    <property type="entry name" value="RNA_pol_Rpb2_7"/>
</dbReference>
<dbReference type="InterPro" id="IPR014724">
    <property type="entry name" value="RNA_pol_RPB2_OB-fold"/>
</dbReference>
<dbReference type="PANTHER" id="PTHR20856">
    <property type="entry name" value="DNA-DIRECTED RNA POLYMERASE I SUBUNIT 2"/>
    <property type="match status" value="1"/>
</dbReference>
<dbReference type="Pfam" id="PF04565">
    <property type="entry name" value="RNA_pol_Rpb2_3"/>
    <property type="match status" value="1"/>
</dbReference>
<dbReference type="Pfam" id="PF04567">
    <property type="entry name" value="RNA_pol_Rpb2_5"/>
    <property type="match status" value="1"/>
</dbReference>
<dbReference type="Pfam" id="PF00562">
    <property type="entry name" value="RNA_pol_Rpb2_6"/>
    <property type="match status" value="1"/>
</dbReference>
<dbReference type="Pfam" id="PF04560">
    <property type="entry name" value="RNA_pol_Rpb2_7"/>
    <property type="match status" value="1"/>
</dbReference>
<dbReference type="Pfam" id="PF12415">
    <property type="entry name" value="rpo132"/>
    <property type="match status" value="1"/>
</dbReference>
<dbReference type="SUPFAM" id="SSF64484">
    <property type="entry name" value="beta and beta-prime subunits of DNA dependent RNA-polymerase"/>
    <property type="match status" value="1"/>
</dbReference>
<dbReference type="PROSITE" id="PS01166">
    <property type="entry name" value="RNA_POL_BETA"/>
    <property type="match status" value="1"/>
</dbReference>
<keyword id="KW-0240">DNA-directed RNA polymerase</keyword>
<keyword id="KW-0479">Metal-binding</keyword>
<keyword id="KW-0548">Nucleotidyltransferase</keyword>
<keyword id="KW-0804">Transcription</keyword>
<keyword id="KW-0808">Transferase</keyword>
<keyword id="KW-0946">Virion</keyword>
<protein>
    <recommendedName>
        <fullName>DNA-directed RNA polymerase 133 kDa polypeptide</fullName>
        <ecNumber>2.7.7.6</ecNumber>
    </recommendedName>
</protein>
<organismHost>
    <name type="scientific">Homo sapiens</name>
    <name type="common">Human</name>
    <dbReference type="NCBI Taxonomy" id="9606"/>
</organismHost>
<name>RP132_VACCT</name>
<organism>
    <name type="scientific">Vaccinia virus (strain Tian Tan)</name>
    <name type="common">VACV</name>
    <dbReference type="NCBI Taxonomy" id="10253"/>
    <lineage>
        <taxon>Viruses</taxon>
        <taxon>Varidnaviria</taxon>
        <taxon>Bamfordvirae</taxon>
        <taxon>Nucleocytoviricota</taxon>
        <taxon>Pokkesviricetes</taxon>
        <taxon>Chitovirales</taxon>
        <taxon>Poxviridae</taxon>
        <taxon>Chordopoxvirinae</taxon>
        <taxon>Orthopoxvirus</taxon>
        <taxon>Vaccinia virus</taxon>
    </lineage>
</organism>
<proteinExistence type="inferred from homology"/>
<gene>
    <name type="primary">RPO132</name>
    <name type="ORF">TA25R</name>
</gene>
<feature type="chain" id="PRO_0000048060" description="DNA-directed RNA polymerase 133 kDa polypeptide">
    <location>
        <begin position="1"/>
        <end position="1164"/>
    </location>
</feature>
<reference key="1">
    <citation type="submission" date="1998-09" db="EMBL/GenBank/DDBJ databases">
        <title>Complete genomic sequence of vaccinia virus (Tian Tan strain).</title>
        <authorList>
            <person name="Jin Q."/>
            <person name="Hou Y.D."/>
            <person name="Cheng N.H."/>
            <person name="Yao E.M."/>
            <person name="Cheng S.X."/>
            <person name="Yang X.K."/>
            <person name="Jing D.Y."/>
            <person name="Yu W.H."/>
            <person name="Yuan J.S."/>
            <person name="Ma X.J."/>
        </authorList>
    </citation>
    <scope>NUCLEOTIDE SEQUENCE [LARGE SCALE GENOMIC DNA]</scope>
</reference>
<reference key="2">
    <citation type="journal article" date="2003" name="J. Gen. Virol.">
        <title>Vaccinia virus transcription.</title>
        <authorList>
            <person name="Broyles S.S."/>
        </authorList>
    </citation>
    <scope>REVIEW</scope>
</reference>
<accession>Q9JF79</accession>
<comment type="function">
    <text>Part of the DNA-dependent RNA polymerase which catalyzes the transcription of viral DNA into RNA using the four ribonucleoside triphosphates as substrates. Responsible for the transcription of early, intermediate and late genes. DNA-dependent RNA polymerase associates with the early transcription factor (ETF), itself composed of D6 and A7, thereby allowing the early genes transcription. Late transcription, and probably also intermediate transcription, require newly synthesized RNA polymerase.</text>
</comment>
<comment type="catalytic activity">
    <reaction>
        <text>RNA(n) + a ribonucleoside 5'-triphosphate = RNA(n+1) + diphosphate</text>
        <dbReference type="Rhea" id="RHEA:21248"/>
        <dbReference type="Rhea" id="RHEA-COMP:14527"/>
        <dbReference type="Rhea" id="RHEA-COMP:17342"/>
        <dbReference type="ChEBI" id="CHEBI:33019"/>
        <dbReference type="ChEBI" id="CHEBI:61557"/>
        <dbReference type="ChEBI" id="CHEBI:140395"/>
        <dbReference type="EC" id="2.7.7.6"/>
    </reaction>
</comment>
<comment type="subunit">
    <text>The DNA-dependent RNA polymerase used for intermediate and late genes expression consists of eight subunits 147 kDa, 133 kDa, 35 kDa, 30 kDa, 22 kDa, 19 kDa, 18 kDa and 7 kDa totalling more than 500 kDa in mass. The same holoenzyme, with the addition of the transcription-specificity factor RAP94, is used for early gene expression.</text>
</comment>
<comment type="subcellular location">
    <subcellularLocation>
        <location evidence="1">Virion</location>
    </subcellularLocation>
    <text>All the enzymes and other proteins required to synthesize early mRNAs are packaged within the virion core along with the DNA genome. This is necessary because viral early mRNAs are synthesized within minutes after virus entry into the cell and are extruded through pores in the core particle.</text>
</comment>
<comment type="similarity">
    <text evidence="1">Belongs to the RNA polymerase beta chain family.</text>
</comment>
<evidence type="ECO:0000305" key="1"/>
<sequence length="1164" mass="133328">MKKNTDSEMDQRLGYKFLVPDPKAGVFYRPLHFQYVSYSNFILHRLHEILTVKRPLLSFKNNTERIMIEISNVKVTPPDYSPIIASIKGKSYDALATFTVNIFKEVMTKEGISITKISSYEGKDSHLIKIPLLIGYGNKNPLDTAKYLVPNVIGGVFINKQSVEKVGINLVEKITTWPKFRVVKPNSFTFSFSSVSPPNVLPTRYRHYKISLDISQLEALNISSTKTFITVNIVLLSQYLSRVSLEFIRRSLSYDMPPEVVYLVNAIIDSAKRITESITDFNIDTYINDLVEAEHIKQKSQLTINEFKYEMLHNFLPHMNYTPDQLKGFYMISLLRKFLYCIYHTSRYPDRDSMVCHRILTYGKYFETLAHDELENYIGNIRNDIMNNHKNRGTYAVNIHVLTTPGLNHAFSSLLSGKFKKSDGSYRTHPHYSWMQNISIPRSVGFYPDQVKISKMFSVRKYHPSQYLYFCSSDVPERGPQVGLVSQLSVLSSITNILTSEYLDLEKKICEYIRSYYKDDISYFETGFPITIENALVASLNPNMICDFVTDFRRRKRMGFFGNLEVGITLVRDHMNEIRINIGAGRLVRPFLVVDNGELMMDACPELESRLDDMTFSDIQKEFPHVIEMVDIEQFTFSNVCESVQKFRMMSKDERKQYDLCDFPAEFRDGYVASSLVGINHNSGPRAILGCAQAKQAISCLSSDIRNKIDNGIHLMYPERPIVISKALETSKIAANCFGQHVTIALMSYKGINQEDGIIIKKQFIQRGGLDIVTAKKHQVEIPLENFNNKERDRSNAYSKLESNGLVRLNAFLESGDAIARNISSRTLEDDFARDNQISFDVPEKYTDMYKSRVERVQVELTDKVKVRVLTMKERRPILGDKFTTRTSQKGTVAYVADETELPYDENGITPDVIINSTSIFSRKTISMLIEVILTAAYSAKPYNNKGENRPVCFPSSNETSIDTYMQFAKQCYEHSNPKLSDEELSDKIFCEKILYDPETDKPYASKVFFGPIYYLRLRHLTQDKATVRCRGKKTKLIRQANEGRKRGGGIKFGEMERDCLIAHGAANTITEVLKDSEEDYQDVYVCENCGDIAAQIKGINTCLRCSKLNLSPLLTKIDTTHVSKVFLTQMNARGVKVKLDFERRPPSFYKPLDKVDLKPSFLV</sequence>